<name>RL35_PSESM</name>
<feature type="chain" id="PRO_0000177404" description="Large ribosomal subunit protein bL35">
    <location>
        <begin position="1"/>
        <end position="64"/>
    </location>
</feature>
<gene>
    <name evidence="1" type="primary">rpmI</name>
    <name type="ordered locus">PSPTO_2380</name>
</gene>
<evidence type="ECO:0000255" key="1">
    <source>
        <dbReference type="HAMAP-Rule" id="MF_00514"/>
    </source>
</evidence>
<evidence type="ECO:0000305" key="2"/>
<dbReference type="EMBL" id="AE016853">
    <property type="protein sequence ID" value="AAO55891.1"/>
    <property type="molecule type" value="Genomic_DNA"/>
</dbReference>
<dbReference type="RefSeq" id="NP_792196.1">
    <property type="nucleotide sequence ID" value="NC_004578.1"/>
</dbReference>
<dbReference type="RefSeq" id="WP_002553160.1">
    <property type="nucleotide sequence ID" value="NC_004578.1"/>
</dbReference>
<dbReference type="SMR" id="P0A163"/>
<dbReference type="STRING" id="223283.PSPTO_2380"/>
<dbReference type="GeneID" id="98112259"/>
<dbReference type="KEGG" id="pst:PSPTO_2380"/>
<dbReference type="PATRIC" id="fig|223283.9.peg.2415"/>
<dbReference type="eggNOG" id="COG0291">
    <property type="taxonomic scope" value="Bacteria"/>
</dbReference>
<dbReference type="HOGENOM" id="CLU_169643_1_1_6"/>
<dbReference type="OrthoDB" id="47476at2"/>
<dbReference type="PhylomeDB" id="P0A163"/>
<dbReference type="PRO" id="PR:P0A163"/>
<dbReference type="Proteomes" id="UP000002515">
    <property type="component" value="Chromosome"/>
</dbReference>
<dbReference type="GO" id="GO:0022625">
    <property type="term" value="C:cytosolic large ribosomal subunit"/>
    <property type="evidence" value="ECO:0007669"/>
    <property type="project" value="TreeGrafter"/>
</dbReference>
<dbReference type="GO" id="GO:0003735">
    <property type="term" value="F:structural constituent of ribosome"/>
    <property type="evidence" value="ECO:0007669"/>
    <property type="project" value="InterPro"/>
</dbReference>
<dbReference type="GO" id="GO:0006412">
    <property type="term" value="P:translation"/>
    <property type="evidence" value="ECO:0007669"/>
    <property type="project" value="UniProtKB-UniRule"/>
</dbReference>
<dbReference type="FunFam" id="4.10.410.60:FF:000001">
    <property type="entry name" value="50S ribosomal protein L35"/>
    <property type="match status" value="1"/>
</dbReference>
<dbReference type="Gene3D" id="4.10.410.60">
    <property type="match status" value="1"/>
</dbReference>
<dbReference type="HAMAP" id="MF_00514">
    <property type="entry name" value="Ribosomal_bL35"/>
    <property type="match status" value="1"/>
</dbReference>
<dbReference type="InterPro" id="IPR001706">
    <property type="entry name" value="Ribosomal_bL35"/>
</dbReference>
<dbReference type="InterPro" id="IPR021137">
    <property type="entry name" value="Ribosomal_bL35-like"/>
</dbReference>
<dbReference type="InterPro" id="IPR018265">
    <property type="entry name" value="Ribosomal_bL35_CS"/>
</dbReference>
<dbReference type="InterPro" id="IPR037229">
    <property type="entry name" value="Ribosomal_bL35_sf"/>
</dbReference>
<dbReference type="NCBIfam" id="TIGR00001">
    <property type="entry name" value="rpmI_bact"/>
    <property type="match status" value="1"/>
</dbReference>
<dbReference type="PANTHER" id="PTHR33343">
    <property type="entry name" value="54S RIBOSOMAL PROTEIN BL35M"/>
    <property type="match status" value="1"/>
</dbReference>
<dbReference type="PANTHER" id="PTHR33343:SF1">
    <property type="entry name" value="LARGE RIBOSOMAL SUBUNIT PROTEIN BL35M"/>
    <property type="match status" value="1"/>
</dbReference>
<dbReference type="Pfam" id="PF01632">
    <property type="entry name" value="Ribosomal_L35p"/>
    <property type="match status" value="1"/>
</dbReference>
<dbReference type="PRINTS" id="PR00064">
    <property type="entry name" value="RIBOSOMALL35"/>
</dbReference>
<dbReference type="SUPFAM" id="SSF143034">
    <property type="entry name" value="L35p-like"/>
    <property type="match status" value="1"/>
</dbReference>
<dbReference type="PROSITE" id="PS00936">
    <property type="entry name" value="RIBOSOMAL_L35"/>
    <property type="match status" value="1"/>
</dbReference>
<comment type="similarity">
    <text evidence="1">Belongs to the bacterial ribosomal protein bL35 family.</text>
</comment>
<protein>
    <recommendedName>
        <fullName evidence="1">Large ribosomal subunit protein bL35</fullName>
    </recommendedName>
    <alternativeName>
        <fullName evidence="2">50S ribosomal protein L35</fullName>
    </alternativeName>
</protein>
<sequence length="64" mass="7368">MPKMKTKSGAAKRFLKTANGIKHKHAFKSHILTKMSTKRKRQLRGSSLLHPSDVAKVERMLRLR</sequence>
<proteinExistence type="inferred from homology"/>
<accession>P0A163</accession>
<accession>P52830</accession>
<reference key="1">
    <citation type="journal article" date="2003" name="Proc. Natl. Acad. Sci. U.S.A.">
        <title>The complete genome sequence of the Arabidopsis and tomato pathogen Pseudomonas syringae pv. tomato DC3000.</title>
        <authorList>
            <person name="Buell C.R."/>
            <person name="Joardar V."/>
            <person name="Lindeberg M."/>
            <person name="Selengut J."/>
            <person name="Paulsen I.T."/>
            <person name="Gwinn M.L."/>
            <person name="Dodson R.J."/>
            <person name="DeBoy R.T."/>
            <person name="Durkin A.S."/>
            <person name="Kolonay J.F."/>
            <person name="Madupu R."/>
            <person name="Daugherty S.C."/>
            <person name="Brinkac L.M."/>
            <person name="Beanan M.J."/>
            <person name="Haft D.H."/>
            <person name="Nelson W.C."/>
            <person name="Davidsen T.M."/>
            <person name="Zafar N."/>
            <person name="Zhou L."/>
            <person name="Liu J."/>
            <person name="Yuan Q."/>
            <person name="Khouri H.M."/>
            <person name="Fedorova N.B."/>
            <person name="Tran B."/>
            <person name="Russell D."/>
            <person name="Berry K.J."/>
            <person name="Utterback T.R."/>
            <person name="Van Aken S.E."/>
            <person name="Feldblyum T.V."/>
            <person name="D'Ascenzo M."/>
            <person name="Deng W.-L."/>
            <person name="Ramos A.R."/>
            <person name="Alfano J.R."/>
            <person name="Cartinhour S."/>
            <person name="Chatterjee A.K."/>
            <person name="Delaney T.P."/>
            <person name="Lazarowitz S.G."/>
            <person name="Martin G.B."/>
            <person name="Schneider D.J."/>
            <person name="Tang X."/>
            <person name="Bender C.L."/>
            <person name="White O."/>
            <person name="Fraser C.M."/>
            <person name="Collmer A."/>
        </authorList>
    </citation>
    <scope>NUCLEOTIDE SEQUENCE [LARGE SCALE GENOMIC DNA]</scope>
    <source>
        <strain>ATCC BAA-871 / DC3000</strain>
    </source>
</reference>
<organism>
    <name type="scientific">Pseudomonas syringae pv. tomato (strain ATCC BAA-871 / DC3000)</name>
    <dbReference type="NCBI Taxonomy" id="223283"/>
    <lineage>
        <taxon>Bacteria</taxon>
        <taxon>Pseudomonadati</taxon>
        <taxon>Pseudomonadota</taxon>
        <taxon>Gammaproteobacteria</taxon>
        <taxon>Pseudomonadales</taxon>
        <taxon>Pseudomonadaceae</taxon>
        <taxon>Pseudomonas</taxon>
    </lineage>
</organism>
<keyword id="KW-1185">Reference proteome</keyword>
<keyword id="KW-0687">Ribonucleoprotein</keyword>
<keyword id="KW-0689">Ribosomal protein</keyword>